<reference key="1">
    <citation type="journal article" date="1995" name="Proc. Natl. Acad. Sci. U.S.A.">
        <title>The nucleotide sequence of chromosome I from Saccharomyces cerevisiae.</title>
        <authorList>
            <person name="Bussey H."/>
            <person name="Kaback D.B."/>
            <person name="Zhong W.-W."/>
            <person name="Vo D.H."/>
            <person name="Clark M.W."/>
            <person name="Fortin N."/>
            <person name="Hall J."/>
            <person name="Ouellette B.F.F."/>
            <person name="Keng T."/>
            <person name="Barton A.B."/>
            <person name="Su Y."/>
            <person name="Davies C.J."/>
            <person name="Storms R.K."/>
        </authorList>
    </citation>
    <scope>NUCLEOTIDE SEQUENCE [LARGE SCALE GENOMIC DNA]</scope>
    <source>
        <strain>ATCC 204508 / S288c</strain>
    </source>
</reference>
<reference key="2">
    <citation type="submission" date="1996-04" db="EMBL/GenBank/DDBJ databases">
        <authorList>
            <person name="Vo D."/>
        </authorList>
    </citation>
    <scope>SEQUENCE REVISION</scope>
    <source>
        <strain>ATCC 204511 / S288c / AB972</strain>
    </source>
</reference>
<reference key="3">
    <citation type="journal article" date="2014" name="G3 (Bethesda)">
        <title>The reference genome sequence of Saccharomyces cerevisiae: Then and now.</title>
        <authorList>
            <person name="Engel S.R."/>
            <person name="Dietrich F.S."/>
            <person name="Fisk D.G."/>
            <person name="Binkley G."/>
            <person name="Balakrishnan R."/>
            <person name="Costanzo M.C."/>
            <person name="Dwight S.S."/>
            <person name="Hitz B.C."/>
            <person name="Karra K."/>
            <person name="Nash R.S."/>
            <person name="Weng S."/>
            <person name="Wong E.D."/>
            <person name="Lloyd P."/>
            <person name="Skrzypek M.S."/>
            <person name="Miyasato S.R."/>
            <person name="Simison M."/>
            <person name="Cherry J.M."/>
        </authorList>
    </citation>
    <scope>GENOME REANNOTATION</scope>
    <source>
        <strain>ATCC 204508 / S288c</strain>
    </source>
</reference>
<reference key="4">
    <citation type="journal article" date="1994" name="Gene">
        <title>Isolation, identification and characterization of the FUN12 gene of Saccharomyces cerevisiae.</title>
        <authorList>
            <person name="Sutrave P."/>
            <person name="Shafer B.K."/>
            <person name="Strathern J.N."/>
            <person name="Hughes S.H."/>
        </authorList>
    </citation>
    <scope>NUCLEOTIDE SEQUENCE [GENOMIC DNA] OF 17-1002</scope>
</reference>
<reference key="5">
    <citation type="journal article" date="1998" name="Science">
        <title>Promotion of met-tRNAiMet binding to ribosomes by yIF2, a bacterial IF2 homolog in yeast.</title>
        <authorList>
            <person name="Choi S.K."/>
            <person name="Lee J.H."/>
            <person name="Zoll W.L."/>
            <person name="Merrick W.C."/>
            <person name="Dever T.E."/>
        </authorList>
    </citation>
    <scope>FUNCTION</scope>
</reference>
<reference key="6">
    <citation type="journal article" date="2002" name="Cell">
        <title>Uncoupling of initiation factor eIF5B/IF2 GTPase and translational activities by mutations that lower ribosome affinity.</title>
        <authorList>
            <person name="Shin B.S."/>
            <person name="Maag D."/>
            <person name="Roll-Mecak A."/>
            <person name="Arefin M.S."/>
            <person name="Burley S.K."/>
            <person name="Lorsch J.R."/>
            <person name="Dever T.E."/>
        </authorList>
    </citation>
    <scope>FUNCTION</scope>
    <scope>CATALYTIC ACTIVITY</scope>
    <scope>MUTAGENESIS OF THR-439 AND HIS-480</scope>
</reference>
<reference key="7">
    <citation type="journal article" date="2002" name="Proc. Natl. Acad. Sci. U.S.A.">
        <title>Initiation factor eIF5B catalyzes second GTP-dependent step in eukaryotic translation initiation.</title>
        <authorList>
            <person name="Lee J.H."/>
            <person name="Pestova T.V."/>
            <person name="Shin B.S."/>
            <person name="Cao C."/>
            <person name="Choi S.K."/>
            <person name="Dever T.E."/>
        </authorList>
    </citation>
    <scope>FUNCTION</scope>
    <scope>MUTAGENESIS OF HIS-480</scope>
</reference>
<reference key="8">
    <citation type="journal article" date="2002" name="RNA">
        <title>Development and characterization of a reconstituted yeast translation initiation system.</title>
        <authorList>
            <person name="Algire M.A."/>
            <person name="Maag D."/>
            <person name="Savio P."/>
            <person name="Acker M.G."/>
            <person name="Tarun S.Z. Jr."/>
            <person name="Sachs A.B."/>
            <person name="Asano K."/>
            <person name="Nielsen K.H."/>
            <person name="Olsen D.S."/>
            <person name="Phan L."/>
            <person name="Hinnebusch A.G."/>
            <person name="Lorsch J.R."/>
        </authorList>
    </citation>
    <scope>FUNCTION</scope>
</reference>
<reference key="9">
    <citation type="journal article" date="2003" name="Nature">
        <title>Global analysis of protein expression in yeast.</title>
        <authorList>
            <person name="Ghaemmaghami S."/>
            <person name="Huh W.-K."/>
            <person name="Bower K."/>
            <person name="Howson R.W."/>
            <person name="Belle A."/>
            <person name="Dephoure N."/>
            <person name="O'Shea E.K."/>
            <person name="Weissman J.S."/>
        </authorList>
    </citation>
    <scope>LEVEL OF PROTEIN EXPRESSION [LARGE SCALE ANALYSIS]</scope>
</reference>
<reference key="10">
    <citation type="journal article" date="2007" name="J. Proteome Res.">
        <title>Large-scale phosphorylation analysis of alpha-factor-arrested Saccharomyces cerevisiae.</title>
        <authorList>
            <person name="Li X."/>
            <person name="Gerber S.A."/>
            <person name="Rudner A.D."/>
            <person name="Beausoleil S.A."/>
            <person name="Haas W."/>
            <person name="Villen J."/>
            <person name="Elias J.E."/>
            <person name="Gygi S.P."/>
        </authorList>
    </citation>
    <scope>IDENTIFICATION BY MASS SPECTROMETRY [LARGE SCALE ANALYSIS]</scope>
    <source>
        <strain>ADR376</strain>
    </source>
</reference>
<reference key="11">
    <citation type="journal article" date="2009" name="J. Mol. Biol.">
        <title>Kinetic analysis of late steps of eukaryotic translation initiation.</title>
        <authorList>
            <person name="Acker M.G."/>
            <person name="Shin B.S."/>
            <person name="Nanda J.S."/>
            <person name="Saini A.K."/>
            <person name="Dever T.E."/>
            <person name="Lorsch J.R."/>
        </authorList>
    </citation>
    <scope>FUNCTION</scope>
    <scope>CATALYTIC ACTIVITY</scope>
</reference>
<reference key="12">
    <citation type="journal article" date="2007" name="Methods Enzymol.">
        <title>Molecular genetic structure-function analysis of translation initiation factor eIF5B.</title>
        <authorList>
            <person name="Shin B.S."/>
            <person name="Dever T.E."/>
        </authorList>
    </citation>
    <scope>MUTAGENESIS OF GLY-479</scope>
</reference>
<reference key="13">
    <citation type="journal article" date="2009" name="Mol. Cell. Biol.">
        <title>rRNA suppressor of a eukaryotic translation initiation factor 5B/initiation factor 2 mutant reveals a binding site for translational GTPases on the small ribosomal subunit.</title>
        <authorList>
            <person name="Shin B.S."/>
            <person name="Kim J.R."/>
            <person name="Acker M.G."/>
            <person name="Maher K.N."/>
            <person name="Lorsch J.R."/>
            <person name="Dever T.E."/>
        </authorList>
    </citation>
    <scope>FUNCTION</scope>
</reference>
<reference key="14">
    <citation type="journal article" date="2009" name="Science">
        <title>Global analysis of Cdk1 substrate phosphorylation sites provides insights into evolution.</title>
        <authorList>
            <person name="Holt L.J."/>
            <person name="Tuch B.B."/>
            <person name="Villen J."/>
            <person name="Johnson A.D."/>
            <person name="Gygi S.P."/>
            <person name="Morgan D.O."/>
        </authorList>
    </citation>
    <scope>PHOSPHORYLATION [LARGE SCALE ANALYSIS] AT SER-405</scope>
    <scope>IDENTIFICATION BY MASS SPECTROMETRY [LARGE SCALE ANALYSIS]</scope>
</reference>
<reference key="15">
    <citation type="journal article" date="2012" name="Nat. Struct. Mol. Biol.">
        <title>Proofreading of pre-40S ribosome maturation by a translation initiation factor and 60S subunits.</title>
        <authorList>
            <person name="Lebaron S."/>
            <person name="Schneider C."/>
            <person name="van Nues R.W."/>
            <person name="Swiatkowska A."/>
            <person name="Walsh D."/>
            <person name="Boettcher B."/>
            <person name="Granneman S."/>
            <person name="Watkins N.J."/>
            <person name="Tollervey D."/>
        </authorList>
    </citation>
    <scope>FUNCTION</scope>
</reference>
<reference key="16">
    <citation type="journal article" date="2013" name="Science">
        <title>Molecular architecture of a eukaryotic translational initiation complex.</title>
        <authorList>
            <person name="Fernandez I.S."/>
            <person name="Bai X.C."/>
            <person name="Hussain T."/>
            <person name="Kelley A.C."/>
            <person name="Lorsch J.R."/>
            <person name="Ramakrishnan V."/>
            <person name="Scheres S.H."/>
        </authorList>
    </citation>
    <scope>STRUCTURE BY ELECTRON MICROSCOPY (4.30 ANGSTROMS) OF 401-739</scope>
</reference>
<reference key="17">
    <citation type="journal article" date="2014" name="Acta Crystallogr. D">
        <title>X-ray structures of eIF5B and the eIF5B-eIF1A complex: the conformational flexibility of eIF5B is restricted on the ribosome by interaction with eIF1A.</title>
        <authorList>
            <person name="Zheng A."/>
            <person name="Yu J."/>
            <person name="Yamamoto R."/>
            <person name="Ose T."/>
            <person name="Tanaka I."/>
            <person name="Yao M."/>
        </authorList>
    </citation>
    <scope>X-RAY CRYSTALLOGRAPHY (2.35 ANGSTROMS) OF 401-1002</scope>
</reference>
<reference key="18">
    <citation type="journal article" date="2014" name="EMBO J.">
        <title>eIF5B employs a novel domain release mechanism to catalyze ribosomal subunit joining.</title>
        <authorList>
            <person name="Kuhle B."/>
            <person name="Ficner R."/>
        </authorList>
    </citation>
    <scope>X-RAY CRYSTALLOGRAPHY (1.83 ANGSTROMS) OF 399-852 IN COMPLEX WITH GTP</scope>
    <scope>FUNCTION</scope>
</reference>
<gene>
    <name evidence="16" type="primary">FUN12</name>
    <name evidence="21" type="ordered locus">YAL035W</name>
</gene>
<proteinExistence type="evidence at protein level"/>
<organism>
    <name type="scientific">Saccharomyces cerevisiae (strain ATCC 204508 / S288c)</name>
    <name type="common">Baker's yeast</name>
    <dbReference type="NCBI Taxonomy" id="559292"/>
    <lineage>
        <taxon>Eukaryota</taxon>
        <taxon>Fungi</taxon>
        <taxon>Dikarya</taxon>
        <taxon>Ascomycota</taxon>
        <taxon>Saccharomycotina</taxon>
        <taxon>Saccharomycetes</taxon>
        <taxon>Saccharomycetales</taxon>
        <taxon>Saccharomycetaceae</taxon>
        <taxon>Saccharomyces</taxon>
    </lineage>
</organism>
<sequence length="1002" mass="112268">MAKKSKKNQQNYWDEEFEEDAAQNEEISATPTPNPESSAGADDTSREASASAEGAEAIEGDFMSTLKQSKKKQEKKVIEEKKDGKPILKSKKEKEKEKKEKEKQKKKEQAARKKAQQQAQKEKNKELNKQNVEKAAAEKAAAEKSQKSKGESDKPSASAKKPAKKVPAGLAALRRQLELKKQLEEQEKLEREEEERLEKEEEERLANEEKMKEEAKAAKKEKEKAKREKRKAEGKLLTRKQKEEKKLLERRRAALLSSGNVKVAGLAKKDGEENKPKKVVYSKKKKRTTQENASEAIKSDSKKDSEVVPDDELKESEDVLIDDWENLALGDDDEEGTNEETQESTASHENEDQNQGEEEEEGEEEEEEEEERAHVHEVAKSTPAATPAATPTPSSASPNKKDLRSPICCILGHVDTGKTKLLDKIRQTNVQGGEAGGITQQIGATYFPIDAIKAKTKVMAEYEKQTFDVPGLLVIDTPGHESFSNLRSRGSSLCNIAILVIDIMHGLEQQTIESIKLLRDRKAPFVVALNKIDRLYDWKAIPNNSFRDSFAKQSRAVQEEFQSRYSKIQLELAEQGLNSELYFQNKNMSKYVSIVPTSAVTGEGVPDLLWLLLELTQKRMSKQLMYLSHVEATILEVKVVEGFGTTIDVILSNGYLREGDRIVLCGMNGPIVTNIRALLTPQPLRELRLKSEYVHHKEVKAALGVKIAANDLEKAVSGSRLLVVGPEDDEDELMDDVMDDLTGLLDSVDTTGKGVVVQASTLGSLEALLDFLKDMKIPVMSIGLGPVYKRDVMKASTMLEKAPEYAVMLCFDVKVDKEAEQYAEQEGIKIFNADVIYHLFDSFTAYQEKLLEERRKDFLDYAIFPCVLQTLQIINKRGPMIIGVDVLEGTLRVGTPICAVKTDPTTKERQTLILGKVISLEINHQPVQEVKKGQTAAGVAVRLEDPSGQQPIWGRHVDENDTLYSLVSRRSIDTLKDKAFRDQVARSDWLLLKKLKVVFGIE</sequence>
<protein>
    <recommendedName>
        <fullName evidence="19">Eukaryotic translation initiation factor 5B</fullName>
        <shortName evidence="15">eIF-5B</shortName>
        <ecNumber evidence="6 9">3.6.5.3</ecNumber>
    </recommendedName>
    <alternativeName>
        <fullName evidence="17">Translation initiation factor IF-2</fullName>
    </alternativeName>
</protein>
<accession>P39730</accession>
<accession>D6VPI2</accession>
<keyword id="KW-0002">3D-structure</keyword>
<keyword id="KW-0963">Cytoplasm</keyword>
<keyword id="KW-0342">GTP-binding</keyword>
<keyword id="KW-0378">Hydrolase</keyword>
<keyword id="KW-0396">Initiation factor</keyword>
<keyword id="KW-0460">Magnesium</keyword>
<keyword id="KW-0479">Metal-binding</keyword>
<keyword id="KW-0547">Nucleotide-binding</keyword>
<keyword id="KW-0597">Phosphoprotein</keyword>
<keyword id="KW-0630">Potassium</keyword>
<keyword id="KW-0648">Protein biosynthesis</keyword>
<keyword id="KW-1185">Reference proteome</keyword>
<keyword id="KW-0915">Sodium</keyword>
<evidence type="ECO:0000250" key="1">
    <source>
        <dbReference type="UniProtKB" id="G0S8G9"/>
    </source>
</evidence>
<evidence type="ECO:0000255" key="2">
    <source>
        <dbReference type="PROSITE-ProRule" id="PRU01059"/>
    </source>
</evidence>
<evidence type="ECO:0000256" key="3">
    <source>
        <dbReference type="SAM" id="MobiDB-lite"/>
    </source>
</evidence>
<evidence type="ECO:0000269" key="4">
    <source>
    </source>
</evidence>
<evidence type="ECO:0000269" key="5">
    <source>
    </source>
</evidence>
<evidence type="ECO:0000269" key="6">
    <source>
    </source>
</evidence>
<evidence type="ECO:0000269" key="7">
    <source>
    </source>
</evidence>
<evidence type="ECO:0000269" key="8">
    <source>
    </source>
</evidence>
<evidence type="ECO:0000269" key="9">
    <source>
    </source>
</evidence>
<evidence type="ECO:0000269" key="10">
    <source>
    </source>
</evidence>
<evidence type="ECO:0000269" key="11">
    <source>
    </source>
</evidence>
<evidence type="ECO:0000269" key="12">
    <source>
    </source>
</evidence>
<evidence type="ECO:0000269" key="13">
    <source>
    </source>
</evidence>
<evidence type="ECO:0000269" key="14">
    <source>
    </source>
</evidence>
<evidence type="ECO:0000303" key="15">
    <source>
    </source>
</evidence>
<evidence type="ECO:0000303" key="16">
    <source>
    </source>
</evidence>
<evidence type="ECO:0000303" key="17">
    <source>
    </source>
</evidence>
<evidence type="ECO:0000305" key="18"/>
<evidence type="ECO:0000305" key="19">
    <source>
    </source>
</evidence>
<evidence type="ECO:0000305" key="20">
    <source>
    </source>
</evidence>
<evidence type="ECO:0000312" key="21">
    <source>
        <dbReference type="SGD" id="S000000033"/>
    </source>
</evidence>
<evidence type="ECO:0007744" key="22">
    <source>
    </source>
</evidence>
<evidence type="ECO:0007829" key="23">
    <source>
        <dbReference type="PDB" id="3WBI"/>
    </source>
</evidence>
<evidence type="ECO:0007829" key="24">
    <source>
        <dbReference type="PDB" id="4N3S"/>
    </source>
</evidence>
<comment type="function">
    <text evidence="4 5 6 9 10 11 13 14">Plays a role in translation initiation (PubMed:9624054). Translational GTPase that catalyzes the joining of the 40S and 60S subunits to form the 80S initiation complex with the initiator methionine-tRNA in the P-site base paired to the start codon (PubMed:12008673, PubMed:12471154, PubMed:12507428). GTP binding and hydrolysis induces conformational changes in the enzyme that renders it active for productive interactions with the ribosome (PubMed:25478828). The release of the enzyme after formation of the initiation complex is a prerequisite to form elongation-competent ribosomes (PubMed:12507428, PubMed:18976658, PubMed:19029250). Stimulates 20S pre-rRNA cleavage to mature 18S rRNA by PIN-domain endonuclease NOB1 (PubMed:22751017).</text>
</comment>
<comment type="catalytic activity">
    <reaction evidence="6 9">
        <text>GTP + H2O = GDP + phosphate + H(+)</text>
        <dbReference type="Rhea" id="RHEA:19669"/>
        <dbReference type="ChEBI" id="CHEBI:15377"/>
        <dbReference type="ChEBI" id="CHEBI:15378"/>
        <dbReference type="ChEBI" id="CHEBI:37565"/>
        <dbReference type="ChEBI" id="CHEBI:43474"/>
        <dbReference type="ChEBI" id="CHEBI:58189"/>
        <dbReference type="EC" id="3.6.5.3"/>
    </reaction>
</comment>
<comment type="cofactor">
    <cofactor evidence="1">
        <name>Na(+)</name>
        <dbReference type="ChEBI" id="CHEBI:29101"/>
    </cofactor>
    <cofactor evidence="1">
        <name>K(+)</name>
        <dbReference type="ChEBI" id="CHEBI:29103"/>
    </cofactor>
    <text evidence="1">Binds 1 monovalent cation per monomer in the active site, which can be sodium or potassium. This structural cofactor stabilizes the GTP-bound 'on' state, and may also act as a transition state stabilizer of the hydrolysis reaction.</text>
</comment>
<comment type="subcellular location">
    <subcellularLocation>
        <location evidence="20">Cytoplasm</location>
    </subcellularLocation>
</comment>
<comment type="miscellaneous">
    <text evidence="7">Present with 13400 molecules/cell in log phase SD medium.</text>
</comment>
<comment type="similarity">
    <text evidence="18">Belongs to the TRAFAC class translation factor GTPase superfamily. Classic translation factor GTPase family. IF-2 subfamily.</text>
</comment>
<comment type="sequence caution" evidence="18">
    <conflict type="frameshift">
        <sequence resource="EMBL-CDS" id="AAA57228"/>
    </conflict>
</comment>
<name>IF2P_YEAST</name>
<feature type="chain" id="PRO_0000137296" description="Eukaryotic translation initiation factor 5B">
    <location>
        <begin position="1"/>
        <end position="1002"/>
    </location>
</feature>
<feature type="domain" description="tr-type G" evidence="2">
    <location>
        <begin position="403"/>
        <end position="621"/>
    </location>
</feature>
<feature type="region of interest" description="Disordered" evidence="3">
    <location>
        <begin position="1"/>
        <end position="172"/>
    </location>
</feature>
<feature type="region of interest" description="Disordered" evidence="3">
    <location>
        <begin position="184"/>
        <end position="402"/>
    </location>
</feature>
<feature type="region of interest" description="G1" evidence="2">
    <location>
        <begin position="412"/>
        <end position="419"/>
    </location>
</feature>
<feature type="region of interest" description="G2" evidence="2">
    <location>
        <begin position="437"/>
        <end position="441"/>
    </location>
</feature>
<feature type="region of interest" description="G3" evidence="2">
    <location>
        <begin position="476"/>
        <end position="479"/>
    </location>
</feature>
<feature type="region of interest" description="G4" evidence="2">
    <location>
        <begin position="530"/>
        <end position="533"/>
    </location>
</feature>
<feature type="region of interest" description="G5" evidence="2">
    <location>
        <begin position="598"/>
        <end position="600"/>
    </location>
</feature>
<feature type="compositionally biased region" description="Acidic residues" evidence="3">
    <location>
        <begin position="13"/>
        <end position="23"/>
    </location>
</feature>
<feature type="compositionally biased region" description="Polar residues" evidence="3">
    <location>
        <begin position="27"/>
        <end position="37"/>
    </location>
</feature>
<feature type="compositionally biased region" description="Low complexity" evidence="3">
    <location>
        <begin position="47"/>
        <end position="57"/>
    </location>
</feature>
<feature type="compositionally biased region" description="Basic and acidic residues" evidence="3">
    <location>
        <begin position="75"/>
        <end position="111"/>
    </location>
</feature>
<feature type="compositionally biased region" description="Basic and acidic residues" evidence="3">
    <location>
        <begin position="120"/>
        <end position="154"/>
    </location>
</feature>
<feature type="compositionally biased region" description="Low complexity" evidence="3">
    <location>
        <begin position="155"/>
        <end position="172"/>
    </location>
</feature>
<feature type="compositionally biased region" description="Basic and acidic residues" evidence="3">
    <location>
        <begin position="184"/>
        <end position="252"/>
    </location>
</feature>
<feature type="compositionally biased region" description="Basic and acidic residues" evidence="3">
    <location>
        <begin position="267"/>
        <end position="276"/>
    </location>
</feature>
<feature type="compositionally biased region" description="Basic residues" evidence="3">
    <location>
        <begin position="277"/>
        <end position="287"/>
    </location>
</feature>
<feature type="compositionally biased region" description="Basic and acidic residues" evidence="3">
    <location>
        <begin position="297"/>
        <end position="306"/>
    </location>
</feature>
<feature type="compositionally biased region" description="Acidic residues" evidence="3">
    <location>
        <begin position="307"/>
        <end position="342"/>
    </location>
</feature>
<feature type="compositionally biased region" description="Acidic residues" evidence="3">
    <location>
        <begin position="352"/>
        <end position="370"/>
    </location>
</feature>
<feature type="compositionally biased region" description="Low complexity" evidence="3">
    <location>
        <begin position="381"/>
        <end position="398"/>
    </location>
</feature>
<feature type="binding site" evidence="12">
    <location>
        <begin position="415"/>
        <end position="420"/>
    </location>
    <ligand>
        <name>GTP</name>
        <dbReference type="ChEBI" id="CHEBI:37565"/>
    </ligand>
</feature>
<feature type="binding site" evidence="1">
    <location>
        <position position="415"/>
    </location>
    <ligand>
        <name>K(+)</name>
        <dbReference type="ChEBI" id="CHEBI:29103"/>
    </ligand>
</feature>
<feature type="binding site" evidence="1">
    <location>
        <position position="415"/>
    </location>
    <ligand>
        <name>Na(+)</name>
        <dbReference type="ChEBI" id="CHEBI:29101"/>
    </ligand>
</feature>
<feature type="binding site" evidence="1">
    <location>
        <position position="419"/>
    </location>
    <ligand>
        <name>Mg(2+)</name>
        <dbReference type="ChEBI" id="CHEBI:18420"/>
    </ligand>
</feature>
<feature type="binding site" evidence="1">
    <location>
        <position position="431"/>
    </location>
    <ligand>
        <name>GTP</name>
        <dbReference type="ChEBI" id="CHEBI:37565"/>
    </ligand>
</feature>
<feature type="binding site" evidence="1">
    <location>
        <begin position="437"/>
        <end position="439"/>
    </location>
    <ligand>
        <name>GTP</name>
        <dbReference type="ChEBI" id="CHEBI:37565"/>
    </ligand>
</feature>
<feature type="binding site" evidence="1">
    <location>
        <position position="437"/>
    </location>
    <ligand>
        <name>K(+)</name>
        <dbReference type="ChEBI" id="CHEBI:29103"/>
    </ligand>
</feature>
<feature type="binding site" evidence="1">
    <location>
        <position position="437"/>
    </location>
    <ligand>
        <name>Na(+)</name>
        <dbReference type="ChEBI" id="CHEBI:29101"/>
    </ligand>
</feature>
<feature type="binding site" evidence="1">
    <location>
        <position position="439"/>
    </location>
    <ligand>
        <name>Mg(2+)</name>
        <dbReference type="ChEBI" id="CHEBI:18420"/>
    </ligand>
</feature>
<feature type="binding site" evidence="12">
    <location>
        <begin position="530"/>
        <end position="533"/>
    </location>
    <ligand>
        <name>GTP</name>
        <dbReference type="ChEBI" id="CHEBI:37565"/>
    </ligand>
</feature>
<feature type="binding site" evidence="12">
    <location>
        <begin position="599"/>
        <end position="600"/>
    </location>
    <ligand>
        <name>GTP</name>
        <dbReference type="ChEBI" id="CHEBI:37565"/>
    </ligand>
</feature>
<feature type="modified residue" description="Phosphoserine" evidence="22">
    <location>
        <position position="405"/>
    </location>
</feature>
<feature type="mutagenesis site" description="Impairs the GTPase activity, but not the ribosome joining function." evidence="6">
    <original>T</original>
    <variation>A</variation>
    <location>
        <position position="439"/>
    </location>
</feature>
<feature type="mutagenesis site" description="Reduces GTP binding and impairs subunit joining and ribosome-dependent GTP hydrolysis." evidence="8">
    <original>G</original>
    <variation>A</variation>
    <location>
        <position position="479"/>
    </location>
</feature>
<feature type="mutagenesis site" description="Impairs the GTPase activity, but not the ribosome joining function." evidence="5 6">
    <original>H</original>
    <variation>E</variation>
    <location>
        <position position="480"/>
    </location>
</feature>
<feature type="sequence conflict" description="In Ref. 4; AAA57228." evidence="18" ref="4">
    <original>L</original>
    <variation>V</variation>
    <location>
        <position position="266"/>
    </location>
</feature>
<feature type="sequence conflict" description="In Ref. 4; AAA57228." evidence="18" ref="4">
    <original>A</original>
    <variation>S</variation>
    <location>
        <position position="293"/>
    </location>
</feature>
<feature type="sequence conflict" description="In Ref. 4; AAA57228." evidence="18" ref="4">
    <original>A</original>
    <variation>D</variation>
    <location>
        <position position="460"/>
    </location>
</feature>
<feature type="sequence conflict" description="In Ref. 4; AAA57228." evidence="18" ref="4">
    <original>G</original>
    <variation>R</variation>
    <location>
        <position position="471"/>
    </location>
</feature>
<feature type="sequence conflict" description="In Ref. 4; AAA57228." evidence="18" ref="4">
    <original>E</original>
    <variation>Q</variation>
    <location>
        <position position="641"/>
    </location>
</feature>
<feature type="sequence conflict" description="In Ref. 4; AAA57228." evidence="18" ref="4">
    <original>L</original>
    <variation>H</variation>
    <location>
        <position position="722"/>
    </location>
</feature>
<feature type="sequence conflict" description="In Ref. 4; AAA57228." evidence="18" ref="4">
    <original>R</original>
    <variation>T</variation>
    <location>
        <position position="970"/>
    </location>
</feature>
<feature type="strand" evidence="24">
    <location>
        <begin position="407"/>
        <end position="411"/>
    </location>
</feature>
<feature type="helix" evidence="23">
    <location>
        <begin position="414"/>
        <end position="416"/>
    </location>
</feature>
<feature type="helix" evidence="24">
    <location>
        <begin position="421"/>
        <end position="425"/>
    </location>
</feature>
<feature type="strand" evidence="23">
    <location>
        <begin position="428"/>
        <end position="430"/>
    </location>
</feature>
<feature type="strand" evidence="23">
    <location>
        <begin position="439"/>
        <end position="441"/>
    </location>
</feature>
<feature type="strand" evidence="24">
    <location>
        <begin position="442"/>
        <end position="448"/>
    </location>
</feature>
<feature type="helix" evidence="24">
    <location>
        <begin position="449"/>
        <end position="456"/>
    </location>
</feature>
<feature type="helix" evidence="24">
    <location>
        <begin position="457"/>
        <end position="461"/>
    </location>
</feature>
<feature type="strand" evidence="24">
    <location>
        <begin position="469"/>
        <end position="475"/>
    </location>
</feature>
<feature type="strand" evidence="24">
    <location>
        <begin position="478"/>
        <end position="480"/>
    </location>
</feature>
<feature type="helix" evidence="24">
    <location>
        <begin position="481"/>
        <end position="483"/>
    </location>
</feature>
<feature type="helix" evidence="24">
    <location>
        <begin position="487"/>
        <end position="489"/>
    </location>
</feature>
<feature type="helix" evidence="24">
    <location>
        <begin position="490"/>
        <end position="493"/>
    </location>
</feature>
<feature type="strand" evidence="24">
    <location>
        <begin position="495"/>
        <end position="502"/>
    </location>
</feature>
<feature type="turn" evidence="24">
    <location>
        <begin position="503"/>
        <end position="505"/>
    </location>
</feature>
<feature type="helix" evidence="24">
    <location>
        <begin position="509"/>
        <end position="521"/>
    </location>
</feature>
<feature type="strand" evidence="24">
    <location>
        <begin position="525"/>
        <end position="530"/>
    </location>
</feature>
<feature type="helix" evidence="24">
    <location>
        <begin position="532"/>
        <end position="534"/>
    </location>
</feature>
<feature type="helix" evidence="24">
    <location>
        <begin position="546"/>
        <end position="551"/>
    </location>
</feature>
<feature type="helix" evidence="24">
    <location>
        <begin position="555"/>
        <end position="573"/>
    </location>
</feature>
<feature type="turn" evidence="24">
    <location>
        <begin position="574"/>
        <end position="576"/>
    </location>
</feature>
<feature type="strand" evidence="24">
    <location>
        <begin position="578"/>
        <end position="581"/>
    </location>
</feature>
<feature type="helix" evidence="24">
    <location>
        <begin position="582"/>
        <end position="584"/>
    </location>
</feature>
<feature type="turn" evidence="24">
    <location>
        <begin position="588"/>
        <end position="590"/>
    </location>
</feature>
<feature type="strand" evidence="24">
    <location>
        <begin position="591"/>
        <end position="596"/>
    </location>
</feature>
<feature type="turn" evidence="24">
    <location>
        <begin position="599"/>
        <end position="601"/>
    </location>
</feature>
<feature type="helix" evidence="24">
    <location>
        <begin position="605"/>
        <end position="619"/>
    </location>
</feature>
<feature type="turn" evidence="24">
    <location>
        <begin position="621"/>
        <end position="624"/>
    </location>
</feature>
<feature type="strand" evidence="24">
    <location>
        <begin position="631"/>
        <end position="640"/>
    </location>
</feature>
<feature type="turn" evidence="24">
    <location>
        <begin position="641"/>
        <end position="643"/>
    </location>
</feature>
<feature type="strand" evidence="24">
    <location>
        <begin position="644"/>
        <end position="657"/>
    </location>
</feature>
<feature type="strand" evidence="24">
    <location>
        <begin position="661"/>
        <end position="666"/>
    </location>
</feature>
<feature type="strand" evidence="24">
    <location>
        <begin position="669"/>
        <end position="681"/>
    </location>
</feature>
<feature type="helix" evidence="24">
    <location>
        <begin position="685"/>
        <end position="688"/>
    </location>
</feature>
<feature type="strand" evidence="24">
    <location>
        <begin position="692"/>
        <end position="709"/>
    </location>
</feature>
<feature type="strand" evidence="23">
    <location>
        <begin position="720"/>
        <end position="723"/>
    </location>
</feature>
<feature type="strand" evidence="24">
    <location>
        <begin position="726"/>
        <end position="728"/>
    </location>
</feature>
<feature type="helix" evidence="24">
    <location>
        <begin position="730"/>
        <end position="746"/>
    </location>
</feature>
<feature type="strand" evidence="23">
    <location>
        <begin position="750"/>
        <end position="752"/>
    </location>
</feature>
<feature type="strand" evidence="24">
    <location>
        <begin position="755"/>
        <end position="761"/>
    </location>
</feature>
<feature type="helix" evidence="24">
    <location>
        <begin position="762"/>
        <end position="774"/>
    </location>
</feature>
<feature type="strand" evidence="24">
    <location>
        <begin position="779"/>
        <end position="781"/>
    </location>
</feature>
<feature type="strand" evidence="24">
    <location>
        <begin position="784"/>
        <end position="787"/>
    </location>
</feature>
<feature type="helix" evidence="24">
    <location>
        <begin position="789"/>
        <end position="796"/>
    </location>
</feature>
<feature type="helix" evidence="24">
    <location>
        <begin position="798"/>
        <end position="801"/>
    </location>
</feature>
<feature type="helix" evidence="23">
    <location>
        <begin position="803"/>
        <end position="805"/>
    </location>
</feature>
<feature type="strand" evidence="24">
    <location>
        <begin position="807"/>
        <end position="812"/>
    </location>
</feature>
<feature type="helix" evidence="24">
    <location>
        <begin position="817"/>
        <end position="826"/>
    </location>
</feature>
<feature type="strand" evidence="24">
    <location>
        <begin position="829"/>
        <end position="835"/>
    </location>
</feature>
<feature type="helix" evidence="24">
    <location>
        <begin position="836"/>
        <end position="851"/>
    </location>
</feature>
<feature type="strand" evidence="23">
    <location>
        <begin position="866"/>
        <end position="879"/>
    </location>
</feature>
<feature type="strand" evidence="23">
    <location>
        <begin position="881"/>
        <end position="892"/>
    </location>
</feature>
<feature type="strand" evidence="23">
    <location>
        <begin position="896"/>
        <end position="903"/>
    </location>
</feature>
<feature type="turn" evidence="23">
    <location>
        <begin position="904"/>
        <end position="907"/>
    </location>
</feature>
<feature type="strand" evidence="23">
    <location>
        <begin position="908"/>
        <end position="922"/>
    </location>
</feature>
<feature type="strand" evidence="23">
    <location>
        <begin position="925"/>
        <end position="931"/>
    </location>
</feature>
<feature type="strand" evidence="23">
    <location>
        <begin position="939"/>
        <end position="944"/>
    </location>
</feature>
<feature type="turn" evidence="23">
    <location>
        <begin position="954"/>
        <end position="956"/>
    </location>
</feature>
<feature type="strand" evidence="23">
    <location>
        <begin position="963"/>
        <end position="965"/>
    </location>
</feature>
<feature type="helix" evidence="23">
    <location>
        <begin position="969"/>
        <end position="974"/>
    </location>
</feature>
<feature type="helix" evidence="23">
    <location>
        <begin position="978"/>
        <end position="981"/>
    </location>
</feature>
<feature type="helix" evidence="23">
    <location>
        <begin position="986"/>
        <end position="999"/>
    </location>
</feature>
<dbReference type="EC" id="3.6.5.3" evidence="6 9"/>
<dbReference type="EMBL" id="U12980">
    <property type="protein sequence ID" value="AAC04996.1"/>
    <property type="molecule type" value="Genomic_DNA"/>
</dbReference>
<dbReference type="EMBL" id="L29389">
    <property type="protein sequence ID" value="AAA57228.1"/>
    <property type="status" value="ALT_FRAME"/>
    <property type="molecule type" value="Genomic_DNA"/>
</dbReference>
<dbReference type="EMBL" id="BK006935">
    <property type="protein sequence ID" value="DAA06952.1"/>
    <property type="molecule type" value="Genomic_DNA"/>
</dbReference>
<dbReference type="PIR" id="S70292">
    <property type="entry name" value="S70292"/>
</dbReference>
<dbReference type="RefSeq" id="NP_009365.1">
    <property type="nucleotide sequence ID" value="NM_001178180.1"/>
</dbReference>
<dbReference type="PDB" id="3WBI">
    <property type="method" value="X-ray"/>
    <property type="resolution" value="2.35 A"/>
    <property type="chains" value="A=401-1002"/>
</dbReference>
<dbReference type="PDB" id="3WBJ">
    <property type="method" value="X-ray"/>
    <property type="resolution" value="2.50 A"/>
    <property type="chains" value="A=401-855"/>
</dbReference>
<dbReference type="PDB" id="3WBK">
    <property type="method" value="X-ray"/>
    <property type="resolution" value="3.30 A"/>
    <property type="chains" value="A/B=401-1002"/>
</dbReference>
<dbReference type="PDB" id="4N3S">
    <property type="method" value="X-ray"/>
    <property type="resolution" value="1.83 A"/>
    <property type="chains" value="A/B=399-852"/>
</dbReference>
<dbReference type="PDB" id="4NCF">
    <property type="method" value="X-ray"/>
    <property type="resolution" value="3.02 A"/>
    <property type="chains" value="A/B=399-852"/>
</dbReference>
<dbReference type="PDB" id="4V8Y">
    <property type="method" value="EM"/>
    <property type="resolution" value="4.30 A"/>
    <property type="chains" value="CP=401-739"/>
</dbReference>
<dbReference type="PDB" id="4V8Z">
    <property type="method" value="EM"/>
    <property type="resolution" value="6.60 A"/>
    <property type="chains" value="CV=401-739"/>
</dbReference>
<dbReference type="PDB" id="6WOO">
    <property type="method" value="EM"/>
    <property type="resolution" value="2.90 A"/>
    <property type="chains" value="1=401-1000"/>
</dbReference>
<dbReference type="PDBsum" id="3WBI"/>
<dbReference type="PDBsum" id="3WBJ"/>
<dbReference type="PDBsum" id="3WBK"/>
<dbReference type="PDBsum" id="4N3S"/>
<dbReference type="PDBsum" id="4NCF"/>
<dbReference type="PDBsum" id="4V8Y"/>
<dbReference type="PDBsum" id="4V8Z"/>
<dbReference type="PDBsum" id="6WOO"/>
<dbReference type="EMDB" id="EMD-21859"/>
<dbReference type="SMR" id="P39730"/>
<dbReference type="BioGRID" id="31730">
    <property type="interactions" value="230"/>
</dbReference>
<dbReference type="DIP" id="DIP-3790N"/>
<dbReference type="FunCoup" id="P39730">
    <property type="interactions" value="620"/>
</dbReference>
<dbReference type="IntAct" id="P39730">
    <property type="interactions" value="151"/>
</dbReference>
<dbReference type="MINT" id="P39730"/>
<dbReference type="STRING" id="4932.YAL035W"/>
<dbReference type="CarbonylDB" id="P39730"/>
<dbReference type="GlyGen" id="P39730">
    <property type="glycosylation" value="3 sites"/>
</dbReference>
<dbReference type="iPTMnet" id="P39730"/>
<dbReference type="PaxDb" id="4932-YAL035W"/>
<dbReference type="PeptideAtlas" id="P39730"/>
<dbReference type="EnsemblFungi" id="YAL035W_mRNA">
    <property type="protein sequence ID" value="YAL035W"/>
    <property type="gene ID" value="YAL035W"/>
</dbReference>
<dbReference type="GeneID" id="851196"/>
<dbReference type="KEGG" id="sce:YAL035W"/>
<dbReference type="AGR" id="SGD:S000000033"/>
<dbReference type="SGD" id="S000000033">
    <property type="gene designation" value="FUN12"/>
</dbReference>
<dbReference type="VEuPathDB" id="FungiDB:YAL035W"/>
<dbReference type="eggNOG" id="KOG1144">
    <property type="taxonomic scope" value="Eukaryota"/>
</dbReference>
<dbReference type="GeneTree" id="ENSGT00940000163243"/>
<dbReference type="HOGENOM" id="CLU_002656_1_0_1"/>
<dbReference type="InParanoid" id="P39730"/>
<dbReference type="OMA" id="EFAVMLC"/>
<dbReference type="OrthoDB" id="4928at2759"/>
<dbReference type="BioCyc" id="YEAST:G3O-28845-MONOMER"/>
<dbReference type="Reactome" id="R-SCE-72706">
    <property type="pathway name" value="GTP hydrolysis and joining of the 60S ribosomal subunit"/>
</dbReference>
<dbReference type="BioGRID-ORCS" id="851196">
    <property type="hits" value="3 hits in 10 CRISPR screens"/>
</dbReference>
<dbReference type="CD-CODE" id="E03F929F">
    <property type="entry name" value="Stress granule"/>
</dbReference>
<dbReference type="EvolutionaryTrace" id="P39730"/>
<dbReference type="PRO" id="PR:P39730"/>
<dbReference type="Proteomes" id="UP000002311">
    <property type="component" value="Chromosome I"/>
</dbReference>
<dbReference type="RNAct" id="P39730">
    <property type="molecule type" value="protein"/>
</dbReference>
<dbReference type="GO" id="GO:0005737">
    <property type="term" value="C:cytoplasm"/>
    <property type="evidence" value="ECO:0007005"/>
    <property type="project" value="SGD"/>
</dbReference>
<dbReference type="GO" id="GO:0010494">
    <property type="term" value="C:cytoplasmic stress granule"/>
    <property type="evidence" value="ECO:0007005"/>
    <property type="project" value="SGD"/>
</dbReference>
<dbReference type="GO" id="GO:0005829">
    <property type="term" value="C:cytosol"/>
    <property type="evidence" value="ECO:0007005"/>
    <property type="project" value="SGD"/>
</dbReference>
<dbReference type="GO" id="GO:0022627">
    <property type="term" value="C:cytosolic small ribosomal subunit"/>
    <property type="evidence" value="ECO:0000314"/>
    <property type="project" value="SGD"/>
</dbReference>
<dbReference type="GO" id="GO:0033290">
    <property type="term" value="C:eukaryotic 48S preinitiation complex"/>
    <property type="evidence" value="ECO:0000314"/>
    <property type="project" value="SGD"/>
</dbReference>
<dbReference type="GO" id="GO:0005739">
    <property type="term" value="C:mitochondrion"/>
    <property type="evidence" value="ECO:0007005"/>
    <property type="project" value="SGD"/>
</dbReference>
<dbReference type="GO" id="GO:0005525">
    <property type="term" value="F:GTP binding"/>
    <property type="evidence" value="ECO:0000314"/>
    <property type="project" value="SGD"/>
</dbReference>
<dbReference type="GO" id="GO:0003924">
    <property type="term" value="F:GTPase activity"/>
    <property type="evidence" value="ECO:0000314"/>
    <property type="project" value="SGD"/>
</dbReference>
<dbReference type="GO" id="GO:0046872">
    <property type="term" value="F:metal ion binding"/>
    <property type="evidence" value="ECO:0007669"/>
    <property type="project" value="UniProtKB-KW"/>
</dbReference>
<dbReference type="GO" id="GO:0043022">
    <property type="term" value="F:ribosome binding"/>
    <property type="evidence" value="ECO:0000314"/>
    <property type="project" value="SGD"/>
</dbReference>
<dbReference type="GO" id="GO:0070181">
    <property type="term" value="F:small ribosomal subunit rRNA binding"/>
    <property type="evidence" value="ECO:0000314"/>
    <property type="project" value="SGD"/>
</dbReference>
<dbReference type="GO" id="GO:0003743">
    <property type="term" value="F:translation initiation factor activity"/>
    <property type="evidence" value="ECO:0000314"/>
    <property type="project" value="SGD"/>
</dbReference>
<dbReference type="GO" id="GO:0031369">
    <property type="term" value="F:translation initiation factor binding"/>
    <property type="evidence" value="ECO:0000314"/>
    <property type="project" value="SGD"/>
</dbReference>
<dbReference type="GO" id="GO:0042256">
    <property type="term" value="P:cytosolic ribosome assembly"/>
    <property type="evidence" value="ECO:0000315"/>
    <property type="project" value="SGD"/>
</dbReference>
<dbReference type="GO" id="GO:0001732">
    <property type="term" value="P:formation of cytoplasmic translation initiation complex"/>
    <property type="evidence" value="ECO:0000314"/>
    <property type="project" value="SGD"/>
</dbReference>
<dbReference type="GO" id="GO:0000462">
    <property type="term" value="P:maturation of SSU-rRNA from tricistronic rRNA transcript (SSU-rRNA, 5.8S rRNA, LSU-rRNA)"/>
    <property type="evidence" value="ECO:0000315"/>
    <property type="project" value="SGD"/>
</dbReference>
<dbReference type="GO" id="GO:0006446">
    <property type="term" value="P:regulation of translational initiation"/>
    <property type="evidence" value="ECO:0000315"/>
    <property type="project" value="SGD"/>
</dbReference>
<dbReference type="GO" id="GO:0042255">
    <property type="term" value="P:ribosome assembly"/>
    <property type="evidence" value="ECO:0000315"/>
    <property type="project" value="SGD"/>
</dbReference>
<dbReference type="GO" id="GO:0006413">
    <property type="term" value="P:translational initiation"/>
    <property type="evidence" value="ECO:0000318"/>
    <property type="project" value="GO_Central"/>
</dbReference>
<dbReference type="CDD" id="cd03703">
    <property type="entry name" value="aeIF5B_II"/>
    <property type="match status" value="1"/>
</dbReference>
<dbReference type="CDD" id="cd16266">
    <property type="entry name" value="IF2_aeIF5B_IV"/>
    <property type="match status" value="1"/>
</dbReference>
<dbReference type="CDD" id="cd01887">
    <property type="entry name" value="IF2_eIF5B"/>
    <property type="match status" value="1"/>
</dbReference>
<dbReference type="FunFam" id="2.40.30.10:FF:000026">
    <property type="entry name" value="Eukaryotic translation initiation factor 5B"/>
    <property type="match status" value="1"/>
</dbReference>
<dbReference type="FunFam" id="3.40.50.10050:FF:000002">
    <property type="entry name" value="Eukaryotic translation initiation factor 5B"/>
    <property type="match status" value="1"/>
</dbReference>
<dbReference type="FunFam" id="3.40.50.300:FF:000112">
    <property type="entry name" value="Eukaryotic translation initiation factor 5B"/>
    <property type="match status" value="1"/>
</dbReference>
<dbReference type="FunFam" id="2.40.30.10:FF:000013">
    <property type="entry name" value="eukaryotic translation initiation factor 5B"/>
    <property type="match status" value="1"/>
</dbReference>
<dbReference type="Gene3D" id="3.40.50.300">
    <property type="entry name" value="P-loop containing nucleotide triphosphate hydrolases"/>
    <property type="match status" value="1"/>
</dbReference>
<dbReference type="Gene3D" id="2.40.30.10">
    <property type="entry name" value="Translation factors"/>
    <property type="match status" value="2"/>
</dbReference>
<dbReference type="Gene3D" id="3.40.50.10050">
    <property type="entry name" value="Translation initiation factor IF- 2, domain 3"/>
    <property type="match status" value="1"/>
</dbReference>
<dbReference type="InterPro" id="IPR029459">
    <property type="entry name" value="EFTU-type"/>
</dbReference>
<dbReference type="InterPro" id="IPR027417">
    <property type="entry name" value="P-loop_NTPase"/>
</dbReference>
<dbReference type="InterPro" id="IPR005225">
    <property type="entry name" value="Small_GTP-bd"/>
</dbReference>
<dbReference type="InterPro" id="IPR000795">
    <property type="entry name" value="T_Tr_GTP-bd_dom"/>
</dbReference>
<dbReference type="InterPro" id="IPR015760">
    <property type="entry name" value="TIF_IF2"/>
</dbReference>
<dbReference type="InterPro" id="IPR023115">
    <property type="entry name" value="TIF_IF2_dom3"/>
</dbReference>
<dbReference type="InterPro" id="IPR036925">
    <property type="entry name" value="TIF_IF2_dom3_sf"/>
</dbReference>
<dbReference type="InterPro" id="IPR009000">
    <property type="entry name" value="Transl_B-barrel_sf"/>
</dbReference>
<dbReference type="NCBIfam" id="NF003078">
    <property type="entry name" value="PRK04004.1"/>
    <property type="match status" value="1"/>
</dbReference>
<dbReference type="NCBIfam" id="TIGR00231">
    <property type="entry name" value="small_GTP"/>
    <property type="match status" value="1"/>
</dbReference>
<dbReference type="PANTHER" id="PTHR43381:SF4">
    <property type="entry name" value="EUKARYOTIC TRANSLATION INITIATION FACTOR 5B"/>
    <property type="match status" value="1"/>
</dbReference>
<dbReference type="PANTHER" id="PTHR43381">
    <property type="entry name" value="TRANSLATION INITIATION FACTOR IF-2-RELATED"/>
    <property type="match status" value="1"/>
</dbReference>
<dbReference type="Pfam" id="PF00009">
    <property type="entry name" value="GTP_EFTU"/>
    <property type="match status" value="1"/>
</dbReference>
<dbReference type="Pfam" id="PF14578">
    <property type="entry name" value="GTP_EFTU_D4"/>
    <property type="match status" value="1"/>
</dbReference>
<dbReference type="Pfam" id="PF11987">
    <property type="entry name" value="IF-2"/>
    <property type="match status" value="1"/>
</dbReference>
<dbReference type="PRINTS" id="PR00315">
    <property type="entry name" value="ELONGATNFCT"/>
</dbReference>
<dbReference type="SUPFAM" id="SSF52156">
    <property type="entry name" value="Initiation factor IF2/eIF5b, domain 3"/>
    <property type="match status" value="1"/>
</dbReference>
<dbReference type="SUPFAM" id="SSF52540">
    <property type="entry name" value="P-loop containing nucleoside triphosphate hydrolases"/>
    <property type="match status" value="1"/>
</dbReference>
<dbReference type="SUPFAM" id="SSF50447">
    <property type="entry name" value="Translation proteins"/>
    <property type="match status" value="1"/>
</dbReference>
<dbReference type="PROSITE" id="PS51722">
    <property type="entry name" value="G_TR_2"/>
    <property type="match status" value="1"/>
</dbReference>